<comment type="catalytic activity">
    <reaction evidence="1">
        <text>sn-glycerol 3-phosphate + an acyl-CoA = a 1-acyl-sn-glycero-3-phosphate + CoA</text>
        <dbReference type="Rhea" id="RHEA:15325"/>
        <dbReference type="ChEBI" id="CHEBI:57287"/>
        <dbReference type="ChEBI" id="CHEBI:57597"/>
        <dbReference type="ChEBI" id="CHEBI:57970"/>
        <dbReference type="ChEBI" id="CHEBI:58342"/>
        <dbReference type="EC" id="2.3.1.15"/>
    </reaction>
</comment>
<comment type="pathway">
    <text evidence="1">Phospholipid metabolism; CDP-diacylglycerol biosynthesis; CDP-diacylglycerol from sn-glycerol 3-phosphate: step 1/3.</text>
</comment>
<comment type="subcellular location">
    <subcellularLocation>
        <location evidence="1">Cell inner membrane</location>
        <topology evidence="1">Peripheral membrane protein</topology>
        <orientation evidence="1">Cytoplasmic side</orientation>
    </subcellularLocation>
</comment>
<comment type="domain">
    <text evidence="1">The HXXXXD motif is essential for acyltransferase activity and may constitute the binding site for the phosphate moiety of the glycerol-3-phosphate.</text>
</comment>
<comment type="similarity">
    <text evidence="1">Belongs to the GPAT/DAPAT family.</text>
</comment>
<gene>
    <name evidence="1" type="primary">plsB</name>
    <name type="ordered locus">SeAg_B4492</name>
</gene>
<accession>B5F1Q4</accession>
<evidence type="ECO:0000255" key="1">
    <source>
        <dbReference type="HAMAP-Rule" id="MF_00393"/>
    </source>
</evidence>
<feature type="chain" id="PRO_1000123089" description="Glycerol-3-phosphate acyltransferase">
    <location>
        <begin position="1"/>
        <end position="806"/>
    </location>
</feature>
<feature type="short sequence motif" description="HXXXXD motif">
    <location>
        <begin position="305"/>
        <end position="310"/>
    </location>
</feature>
<name>PLSB_SALA4</name>
<dbReference type="EC" id="2.3.1.15" evidence="1"/>
<dbReference type="EMBL" id="CP001138">
    <property type="protein sequence ID" value="ACH49828.1"/>
    <property type="molecule type" value="Genomic_DNA"/>
</dbReference>
<dbReference type="RefSeq" id="WP_000017360.1">
    <property type="nucleotide sequence ID" value="NC_011149.1"/>
</dbReference>
<dbReference type="SMR" id="B5F1Q4"/>
<dbReference type="KEGG" id="sea:SeAg_B4492"/>
<dbReference type="HOGENOM" id="CLU_015407_0_0_6"/>
<dbReference type="UniPathway" id="UPA00557">
    <property type="reaction ID" value="UER00612"/>
</dbReference>
<dbReference type="Proteomes" id="UP000008819">
    <property type="component" value="Chromosome"/>
</dbReference>
<dbReference type="GO" id="GO:0005886">
    <property type="term" value="C:plasma membrane"/>
    <property type="evidence" value="ECO:0007669"/>
    <property type="project" value="UniProtKB-SubCell"/>
</dbReference>
<dbReference type="GO" id="GO:0004366">
    <property type="term" value="F:glycerol-3-phosphate O-acyltransferase activity"/>
    <property type="evidence" value="ECO:0007669"/>
    <property type="project" value="UniProtKB-UniRule"/>
</dbReference>
<dbReference type="GO" id="GO:0016024">
    <property type="term" value="P:CDP-diacylglycerol biosynthetic process"/>
    <property type="evidence" value="ECO:0007669"/>
    <property type="project" value="UniProtKB-UniRule"/>
</dbReference>
<dbReference type="GO" id="GO:0006631">
    <property type="term" value="P:fatty acid metabolic process"/>
    <property type="evidence" value="ECO:0007669"/>
    <property type="project" value="TreeGrafter"/>
</dbReference>
<dbReference type="CDD" id="cd07993">
    <property type="entry name" value="LPLAT_DHAPAT-like"/>
    <property type="match status" value="1"/>
</dbReference>
<dbReference type="HAMAP" id="MF_00393">
    <property type="entry name" value="Glyc3P_acyltrans"/>
    <property type="match status" value="1"/>
</dbReference>
<dbReference type="InterPro" id="IPR022284">
    <property type="entry name" value="GPAT/DHAPAT"/>
</dbReference>
<dbReference type="InterPro" id="IPR045520">
    <property type="entry name" value="GPAT/DHAPAT_C"/>
</dbReference>
<dbReference type="InterPro" id="IPR041728">
    <property type="entry name" value="GPAT/DHAPAT_LPLAT"/>
</dbReference>
<dbReference type="InterPro" id="IPR028354">
    <property type="entry name" value="GPAT_PlsB"/>
</dbReference>
<dbReference type="InterPro" id="IPR002123">
    <property type="entry name" value="Plipid/glycerol_acylTrfase"/>
</dbReference>
<dbReference type="NCBIfam" id="TIGR03703">
    <property type="entry name" value="plsB"/>
    <property type="match status" value="1"/>
</dbReference>
<dbReference type="NCBIfam" id="NF003441">
    <property type="entry name" value="PRK04974.1"/>
    <property type="match status" value="1"/>
</dbReference>
<dbReference type="PANTHER" id="PTHR12563:SF17">
    <property type="entry name" value="DIHYDROXYACETONE PHOSPHATE ACYLTRANSFERASE"/>
    <property type="match status" value="1"/>
</dbReference>
<dbReference type="PANTHER" id="PTHR12563">
    <property type="entry name" value="GLYCEROL-3-PHOSPHATE ACYLTRANSFERASE"/>
    <property type="match status" value="1"/>
</dbReference>
<dbReference type="Pfam" id="PF01553">
    <property type="entry name" value="Acyltransferase"/>
    <property type="match status" value="1"/>
</dbReference>
<dbReference type="Pfam" id="PF19277">
    <property type="entry name" value="GPAT_C"/>
    <property type="match status" value="1"/>
</dbReference>
<dbReference type="PIRSF" id="PIRSF500064">
    <property type="entry name" value="GPAT"/>
    <property type="match status" value="1"/>
</dbReference>
<dbReference type="PIRSF" id="PIRSF000437">
    <property type="entry name" value="GPAT_DHAPAT"/>
    <property type="match status" value="1"/>
</dbReference>
<dbReference type="SMART" id="SM00563">
    <property type="entry name" value="PlsC"/>
    <property type="match status" value="1"/>
</dbReference>
<dbReference type="SUPFAM" id="SSF69593">
    <property type="entry name" value="Glycerol-3-phosphate (1)-acyltransferase"/>
    <property type="match status" value="1"/>
</dbReference>
<organism>
    <name type="scientific">Salmonella agona (strain SL483)</name>
    <dbReference type="NCBI Taxonomy" id="454166"/>
    <lineage>
        <taxon>Bacteria</taxon>
        <taxon>Pseudomonadati</taxon>
        <taxon>Pseudomonadota</taxon>
        <taxon>Gammaproteobacteria</taxon>
        <taxon>Enterobacterales</taxon>
        <taxon>Enterobacteriaceae</taxon>
        <taxon>Salmonella</taxon>
    </lineage>
</organism>
<protein>
    <recommendedName>
        <fullName evidence="1">Glycerol-3-phosphate acyltransferase</fullName>
        <shortName evidence="1">GPAT</shortName>
        <ecNumber evidence="1">2.3.1.15</ecNumber>
    </recommendedName>
</protein>
<proteinExistence type="inferred from homology"/>
<reference key="1">
    <citation type="journal article" date="2011" name="J. Bacteriol.">
        <title>Comparative genomics of 28 Salmonella enterica isolates: evidence for CRISPR-mediated adaptive sublineage evolution.</title>
        <authorList>
            <person name="Fricke W.F."/>
            <person name="Mammel M.K."/>
            <person name="McDermott P.F."/>
            <person name="Tartera C."/>
            <person name="White D.G."/>
            <person name="Leclerc J.E."/>
            <person name="Ravel J."/>
            <person name="Cebula T.A."/>
        </authorList>
    </citation>
    <scope>NUCLEOTIDE SEQUENCE [LARGE SCALE GENOMIC DNA]</scope>
    <source>
        <strain>SL483</strain>
    </source>
</reference>
<sequence length="806" mass="91227">MSGWPRIYYKLLNLPLSILVKSKSIPAEPAQELGLDTSRPIMYVLPYNSKADLLTLRAQCLAHDLPDPLEPLEIDGALLPRYVFIHGGPRVFTYYTPKEESVKLFHDYLDLHRSNPALDVQMVPVSVMFGRAPGREKGEDNPPLRMLNGVQKFFAISWLGRDSFVRFSPSVSLRRMADEHGTDKIIAQKLARVARMHFARQRLAAVGPRLPARQDLFNKLLASKAIARAVEDEARSKKISHEKAQQNAIALMEEIAANFSYEMIRLTDRILGFTWNRLYQGINVHNAERVRQLAHDGHEIVYVPCHRSHMDYLLLSYVLYHQGLVPPHIAAGINLNFWPAGPIFRRLGAFFIRRTFKGNKLYSTVFREYLGELFSRGYSVEYFVEGGRSRTGRLLDPKTGTLSMTIQAMLRGGTRPITLVPIYIGYEHVMEVGTYAKELRGATKEKESLPQMLKGLSKLRNLGQGYVNFGEPMPLMTYLNQHVPEWRESIDPIEAIRPAWLTPTVNSIAADLMVRINNAGAANAMNLCCTALLASRQRSLTREQLTEQLDCYLDLMRNVPYSTDSTVPAASAGELIAHALQMNKFEVEKDTIGDIIILPREQAVLMTYYRNNIAHMLIMPSLMAAIITQHRRISRDALQQHVEALYPMLKAELFLRWEREELASVIDALASEMQRQGLITLQDDELHINPTHSRTLQLLAAGARETLQRYAITFWLLSANPSINRSTLEKESRTVAQRLSVLHGINAPEFFDKAVFSSLVLTLRDEGYISDTGDAEPAETMKIYQMLADLITSDVRLTIESATQGE</sequence>
<keyword id="KW-0012">Acyltransferase</keyword>
<keyword id="KW-0997">Cell inner membrane</keyword>
<keyword id="KW-1003">Cell membrane</keyword>
<keyword id="KW-0444">Lipid biosynthesis</keyword>
<keyword id="KW-0443">Lipid metabolism</keyword>
<keyword id="KW-0472">Membrane</keyword>
<keyword id="KW-0594">Phospholipid biosynthesis</keyword>
<keyword id="KW-1208">Phospholipid metabolism</keyword>
<keyword id="KW-0808">Transferase</keyword>